<gene>
    <name type="primary">FGFR2</name>
</gene>
<protein>
    <recommendedName>
        <fullName>Fibroblast growth factor receptor 2</fullName>
        <shortName>FGFR-2</shortName>
        <ecNumber>2.7.10.1</ecNumber>
    </recommendedName>
</protein>
<name>FGFR2_NOTVI</name>
<evidence type="ECO:0000250" key="1"/>
<evidence type="ECO:0000255" key="2"/>
<evidence type="ECO:0000255" key="3">
    <source>
        <dbReference type="PROSITE-ProRule" id="PRU00114"/>
    </source>
</evidence>
<evidence type="ECO:0000255" key="4">
    <source>
        <dbReference type="PROSITE-ProRule" id="PRU00159"/>
    </source>
</evidence>
<evidence type="ECO:0000255" key="5">
    <source>
        <dbReference type="PROSITE-ProRule" id="PRU10028"/>
    </source>
</evidence>
<evidence type="ECO:0000256" key="6">
    <source>
        <dbReference type="SAM" id="MobiDB-lite"/>
    </source>
</evidence>
<dbReference type="EC" id="2.7.10.1"/>
<dbReference type="EMBL" id="L19869">
    <property type="protein sequence ID" value="AAA49395.1"/>
    <property type="molecule type" value="mRNA"/>
</dbReference>
<dbReference type="PIR" id="S41050">
    <property type="entry name" value="S41050"/>
</dbReference>
<dbReference type="SMR" id="Q91147"/>
<dbReference type="GlyCosmos" id="Q91147">
    <property type="glycosylation" value="8 sites, No reported glycans"/>
</dbReference>
<dbReference type="GO" id="GO:0031410">
    <property type="term" value="C:cytoplasmic vesicle"/>
    <property type="evidence" value="ECO:0007669"/>
    <property type="project" value="UniProtKB-KW"/>
</dbReference>
<dbReference type="GO" id="GO:0005794">
    <property type="term" value="C:Golgi apparatus"/>
    <property type="evidence" value="ECO:0007669"/>
    <property type="project" value="UniProtKB-SubCell"/>
</dbReference>
<dbReference type="GO" id="GO:0005886">
    <property type="term" value="C:plasma membrane"/>
    <property type="evidence" value="ECO:0007669"/>
    <property type="project" value="UniProtKB-SubCell"/>
</dbReference>
<dbReference type="GO" id="GO:0043235">
    <property type="term" value="C:receptor complex"/>
    <property type="evidence" value="ECO:0007669"/>
    <property type="project" value="TreeGrafter"/>
</dbReference>
<dbReference type="GO" id="GO:0005524">
    <property type="term" value="F:ATP binding"/>
    <property type="evidence" value="ECO:0007669"/>
    <property type="project" value="UniProtKB-KW"/>
</dbReference>
<dbReference type="GO" id="GO:0017134">
    <property type="term" value="F:fibroblast growth factor binding"/>
    <property type="evidence" value="ECO:0007669"/>
    <property type="project" value="TreeGrafter"/>
</dbReference>
<dbReference type="GO" id="GO:0005007">
    <property type="term" value="F:fibroblast growth factor receptor activity"/>
    <property type="evidence" value="ECO:0007669"/>
    <property type="project" value="InterPro"/>
</dbReference>
<dbReference type="GO" id="GO:0006915">
    <property type="term" value="P:apoptotic process"/>
    <property type="evidence" value="ECO:0007669"/>
    <property type="project" value="UniProtKB-KW"/>
</dbReference>
<dbReference type="GO" id="GO:0008284">
    <property type="term" value="P:positive regulation of cell population proliferation"/>
    <property type="evidence" value="ECO:0007669"/>
    <property type="project" value="InterPro"/>
</dbReference>
<dbReference type="CDD" id="cd05857">
    <property type="entry name" value="IgI_2_FGFR"/>
    <property type="match status" value="1"/>
</dbReference>
<dbReference type="FunFam" id="1.10.510.10:FF:000007">
    <property type="entry name" value="Fibroblast growth factor receptor"/>
    <property type="match status" value="1"/>
</dbReference>
<dbReference type="FunFam" id="2.60.40.10:FF:000016">
    <property type="entry name" value="Fibroblast growth factor receptor"/>
    <property type="match status" value="1"/>
</dbReference>
<dbReference type="FunFam" id="2.60.40.10:FF:000020">
    <property type="entry name" value="Fibroblast growth factor receptor"/>
    <property type="match status" value="1"/>
</dbReference>
<dbReference type="FunFam" id="3.30.200.20:FF:000011">
    <property type="entry name" value="Fibroblast growth factor receptor"/>
    <property type="match status" value="1"/>
</dbReference>
<dbReference type="Gene3D" id="2.60.40.10">
    <property type="entry name" value="Immunoglobulins"/>
    <property type="match status" value="2"/>
</dbReference>
<dbReference type="Gene3D" id="3.30.200.20">
    <property type="entry name" value="Phosphorylase Kinase, domain 1"/>
    <property type="match status" value="1"/>
</dbReference>
<dbReference type="Gene3D" id="1.10.510.10">
    <property type="entry name" value="Transferase(Phosphotransferase) domain 1"/>
    <property type="match status" value="1"/>
</dbReference>
<dbReference type="InterPro" id="IPR016248">
    <property type="entry name" value="FGF_rcpt_fam"/>
</dbReference>
<dbReference type="InterPro" id="IPR007110">
    <property type="entry name" value="Ig-like_dom"/>
</dbReference>
<dbReference type="InterPro" id="IPR036179">
    <property type="entry name" value="Ig-like_dom_sf"/>
</dbReference>
<dbReference type="InterPro" id="IPR013783">
    <property type="entry name" value="Ig-like_fold"/>
</dbReference>
<dbReference type="InterPro" id="IPR013098">
    <property type="entry name" value="Ig_I-set"/>
</dbReference>
<dbReference type="InterPro" id="IPR003599">
    <property type="entry name" value="Ig_sub"/>
</dbReference>
<dbReference type="InterPro" id="IPR003598">
    <property type="entry name" value="Ig_sub2"/>
</dbReference>
<dbReference type="InterPro" id="IPR011009">
    <property type="entry name" value="Kinase-like_dom_sf"/>
</dbReference>
<dbReference type="InterPro" id="IPR000719">
    <property type="entry name" value="Prot_kinase_dom"/>
</dbReference>
<dbReference type="InterPro" id="IPR017441">
    <property type="entry name" value="Protein_kinase_ATP_BS"/>
</dbReference>
<dbReference type="InterPro" id="IPR050122">
    <property type="entry name" value="RTK"/>
</dbReference>
<dbReference type="InterPro" id="IPR001245">
    <property type="entry name" value="Ser-Thr/Tyr_kinase_cat_dom"/>
</dbReference>
<dbReference type="InterPro" id="IPR008266">
    <property type="entry name" value="Tyr_kinase_AS"/>
</dbReference>
<dbReference type="InterPro" id="IPR020635">
    <property type="entry name" value="Tyr_kinase_cat_dom"/>
</dbReference>
<dbReference type="PANTHER" id="PTHR24416:SF130">
    <property type="entry name" value="FIBROBLAST GROWTH FACTOR RECEPTOR 2"/>
    <property type="match status" value="1"/>
</dbReference>
<dbReference type="PANTHER" id="PTHR24416">
    <property type="entry name" value="TYROSINE-PROTEIN KINASE RECEPTOR"/>
    <property type="match status" value="1"/>
</dbReference>
<dbReference type="Pfam" id="PF07679">
    <property type="entry name" value="I-set"/>
    <property type="match status" value="2"/>
</dbReference>
<dbReference type="Pfam" id="PF07714">
    <property type="entry name" value="PK_Tyr_Ser-Thr"/>
    <property type="match status" value="1"/>
</dbReference>
<dbReference type="PIRSF" id="PIRSF000628">
    <property type="entry name" value="FGFR"/>
    <property type="match status" value="1"/>
</dbReference>
<dbReference type="PRINTS" id="PR00109">
    <property type="entry name" value="TYRKINASE"/>
</dbReference>
<dbReference type="SMART" id="SM00409">
    <property type="entry name" value="IG"/>
    <property type="match status" value="2"/>
</dbReference>
<dbReference type="SMART" id="SM00408">
    <property type="entry name" value="IGc2"/>
    <property type="match status" value="2"/>
</dbReference>
<dbReference type="SMART" id="SM00219">
    <property type="entry name" value="TyrKc"/>
    <property type="match status" value="1"/>
</dbReference>
<dbReference type="SUPFAM" id="SSF48726">
    <property type="entry name" value="Immunoglobulin"/>
    <property type="match status" value="2"/>
</dbReference>
<dbReference type="SUPFAM" id="SSF56112">
    <property type="entry name" value="Protein kinase-like (PK-like)"/>
    <property type="match status" value="1"/>
</dbReference>
<dbReference type="PROSITE" id="PS50835">
    <property type="entry name" value="IG_LIKE"/>
    <property type="match status" value="2"/>
</dbReference>
<dbReference type="PROSITE" id="PS00107">
    <property type="entry name" value="PROTEIN_KINASE_ATP"/>
    <property type="match status" value="1"/>
</dbReference>
<dbReference type="PROSITE" id="PS50011">
    <property type="entry name" value="PROTEIN_KINASE_DOM"/>
    <property type="match status" value="1"/>
</dbReference>
<dbReference type="PROSITE" id="PS00109">
    <property type="entry name" value="PROTEIN_KINASE_TYR"/>
    <property type="match status" value="1"/>
</dbReference>
<proteinExistence type="evidence at transcript level"/>
<organism>
    <name type="scientific">Notophthalmus viridescens</name>
    <name type="common">Eastern newt</name>
    <name type="synonym">Triturus viridescens</name>
    <dbReference type="NCBI Taxonomy" id="8316"/>
    <lineage>
        <taxon>Eukaryota</taxon>
        <taxon>Metazoa</taxon>
        <taxon>Chordata</taxon>
        <taxon>Craniata</taxon>
        <taxon>Vertebrata</taxon>
        <taxon>Euteleostomi</taxon>
        <taxon>Amphibia</taxon>
        <taxon>Batrachia</taxon>
        <taxon>Caudata</taxon>
        <taxon>Salamandroidea</taxon>
        <taxon>Salamandridae</taxon>
        <taxon>Pleurodelinae</taxon>
        <taxon>Notophthalmus</taxon>
    </lineage>
</organism>
<reference key="1">
    <citation type="journal article" date="1994" name="Biochim. Biophys. Acta">
        <title>Nucleotide sequences of two newt (Notophthalmus viridescens) fibroblast growth factor receptor-2 variants.</title>
        <authorList>
            <person name="Poulin M.L."/>
            <person name="Chiu I.-M."/>
        </authorList>
    </citation>
    <scope>NUCLEOTIDE SEQUENCE [MRNA]</scope>
    <source>
        <tissue>Regenerating forelimb blastema</tissue>
    </source>
</reference>
<sequence>MFSWSYLMGLVMVATATLSLARPSYNIAEDTTLEPEDANSSGDDEDDNDGSEDFTNDNNHMRAPYWTNTEKLEKKLHAVPAANTVKFRCPAGGNPTPSMRWLKNGKEFKQEHRIGGFKVRSQHFSLIMESVVPSDEGNYTCIMENEYGSINHTYHLDVVERSPHRPILQAGLPANTTTKVGGDAEFVCKVYSDAQPHIQWIRHFELNGSKIGPDGHPYLKVLKAAGVNTTDKEIEVLYVRNVSFEDAGEYTCLAGNSTGISYHTAWLTVLPDEERELDSSSEYTEIAIYCVGGFLITCMIGTIMVCHMKGRGKKSDFSSPPAVHKLSKSLPLRRQVTVSADSSSSMNSNTPLVRITTRLSSNNDTHLLAGVSEYELPEDPKWEYPREKLTLGKPLGEGCFGQVVMAEAVGIDKDRPKDAATVAVKMLKDDATEKDLSDLVSEMEMMKMIGKHKNIINLLGACTQDGPLYVIVEYASKGNLREYLRTRRPPGMEYSFDINRIPEEQMTFKDLVSCTYQLARGMEYLASQKCIHRDLAARNVLVTETNVMKIADFGLARDINNIDYYKKTTNGRLPVKWMAPEALFDRVYTHQSDVWSFGVLMWEIFTLGGSPYPGIPVEELFKLLKEGHRMDKPGNCTNELYTMMTDCWRAVPSQRPTFKQLVEDLDRILTQTTNEEYLDLNNPLEQYSPSYPDTRSSCSSGDDSVFSPDAMPYDPCLPKSQHTNGTIKT</sequence>
<feature type="signal peptide" evidence="2">
    <location>
        <begin position="1"/>
        <end position="21"/>
    </location>
</feature>
<feature type="chain" id="PRO_0000249204" description="Fibroblast growth factor receptor 2">
    <location>
        <begin position="22"/>
        <end position="729"/>
    </location>
</feature>
<feature type="topological domain" description="Extracellular" evidence="2">
    <location>
        <begin position="22"/>
        <end position="285"/>
    </location>
</feature>
<feature type="transmembrane region" description="Helical" evidence="2">
    <location>
        <begin position="286"/>
        <end position="306"/>
    </location>
</feature>
<feature type="topological domain" description="Cytoplasmic" evidence="2">
    <location>
        <begin position="307"/>
        <end position="729"/>
    </location>
</feature>
<feature type="domain" description="Ig-like C2-type 1">
    <location>
        <begin position="64"/>
        <end position="157"/>
    </location>
</feature>
<feature type="domain" description="Ig-like C2-type 2">
    <location>
        <begin position="166"/>
        <end position="268"/>
    </location>
</feature>
<feature type="domain" description="Protein kinase" evidence="4">
    <location>
        <begin position="389"/>
        <end position="678"/>
    </location>
</feature>
<feature type="region of interest" description="Disordered" evidence="6">
    <location>
        <begin position="29"/>
        <end position="62"/>
    </location>
</feature>
<feature type="region of interest" description="Heparin-binding" evidence="1">
    <location>
        <begin position="71"/>
        <end position="88"/>
    </location>
</feature>
<feature type="region of interest" description="Disordered" evidence="6">
    <location>
        <begin position="683"/>
        <end position="729"/>
    </location>
</feature>
<feature type="compositionally biased region" description="Acidic residues" evidence="6">
    <location>
        <begin position="31"/>
        <end position="55"/>
    </location>
</feature>
<feature type="compositionally biased region" description="Low complexity" evidence="6">
    <location>
        <begin position="693"/>
        <end position="707"/>
    </location>
</feature>
<feature type="compositionally biased region" description="Polar residues" evidence="6">
    <location>
        <begin position="720"/>
        <end position="729"/>
    </location>
</feature>
<feature type="active site" description="Proton acceptor" evidence="4 5">
    <location>
        <position position="534"/>
    </location>
</feature>
<feature type="binding site" evidence="4">
    <location>
        <begin position="395"/>
        <end position="403"/>
    </location>
    <ligand>
        <name>ATP</name>
        <dbReference type="ChEBI" id="CHEBI:30616"/>
    </ligand>
</feature>
<feature type="binding site" evidence="4">
    <location>
        <position position="425"/>
    </location>
    <ligand>
        <name>ATP</name>
        <dbReference type="ChEBI" id="CHEBI:30616"/>
    </ligand>
</feature>
<feature type="binding site" evidence="4">
    <location>
        <begin position="473"/>
        <end position="475"/>
    </location>
    <ligand>
        <name>ATP</name>
        <dbReference type="ChEBI" id="CHEBI:30616"/>
    </ligand>
</feature>
<feature type="binding site" evidence="4">
    <location>
        <position position="479"/>
    </location>
    <ligand>
        <name>ATP</name>
        <dbReference type="ChEBI" id="CHEBI:30616"/>
    </ligand>
</feature>
<feature type="modified residue" description="Phosphotyrosine; by autocatalysis" evidence="1">
    <location>
        <position position="374"/>
    </location>
</feature>
<feature type="modified residue" description="Phosphotyrosine; by autocatalysis" evidence="1">
    <location>
        <position position="494"/>
    </location>
</feature>
<feature type="modified residue" description="Phosphotyrosine; by autocatalysis" evidence="1">
    <location>
        <position position="564"/>
    </location>
</feature>
<feature type="modified residue" description="Phosphotyrosine; by autocatalysis" evidence="1">
    <location>
        <position position="565"/>
    </location>
</feature>
<feature type="modified residue" description="Phosphotyrosine; by autocatalysis" evidence="1">
    <location>
        <position position="677"/>
    </location>
</feature>
<feature type="glycosylation site" description="N-linked (GlcNAc...) asparagine" evidence="2">
    <location>
        <position position="39"/>
    </location>
</feature>
<feature type="glycosylation site" description="N-linked (GlcNAc...) asparagine" evidence="2">
    <location>
        <position position="138"/>
    </location>
</feature>
<feature type="glycosylation site" description="N-linked (GlcNAc...) asparagine" evidence="2">
    <location>
        <position position="151"/>
    </location>
</feature>
<feature type="glycosylation site" description="N-linked (GlcNAc...) asparagine" evidence="2">
    <location>
        <position position="175"/>
    </location>
</feature>
<feature type="glycosylation site" description="N-linked (GlcNAc...) asparagine" evidence="2">
    <location>
        <position position="207"/>
    </location>
</feature>
<feature type="glycosylation site" description="N-linked (GlcNAc...) asparagine" evidence="2">
    <location>
        <position position="228"/>
    </location>
</feature>
<feature type="glycosylation site" description="N-linked (GlcNAc...) asparagine" evidence="2">
    <location>
        <position position="241"/>
    </location>
</feature>
<feature type="glycosylation site" description="N-linked (GlcNAc...) asparagine" evidence="2">
    <location>
        <position position="256"/>
    </location>
</feature>
<feature type="disulfide bond" evidence="3">
    <location>
        <begin position="89"/>
        <end position="141"/>
    </location>
</feature>
<feature type="disulfide bond" evidence="3">
    <location>
        <begin position="188"/>
        <end position="252"/>
    </location>
</feature>
<accession>Q91147</accession>
<comment type="function">
    <text evidence="1">Tyrosine-protein kinase that acts as a cell-surface receptor for fibroblast growth factors and plays an essential role in the regulation of cell proliferation, differentiation, migration and apoptosis, and in the regulation of embryonic development. Required for normal embryonic patterning, limb bud development, lung morphogenesis, osteogenesis and skin development. Plays an essential role in the regulation of osteoblast differentiation, proliferation and apoptosis, and is required for normal skeleton development. Promotes cell proliferation in keratinocytes and immature osteoblasts, but promotes apoptosis in differentiated osteoblasts. Phosphorylates PLCG1, FRS2 and PAK4. Ligand binding leads to the activation of several signaling cascades. Activation of PLCG1 leads to the production of the cellular signaling molecules diacylglycerol and inositol 1,4,5-trisphosphate. Phosphorylation of FRS2 triggers recruitment of GRB2, GAB1, PIK3R1 and SOS1, and mediates activation of RAS, MAPK1/ERK2, MAPK3/ERK1 and the MAP kinase signaling pathway, as well as of the AKT1 signaling pathway. FGFR2 signaling is down-regulated by ubiquitination, internalization and degradation. Mutations that lead to constitutive kinase activation or impair normal FGFR2 maturation, internalization and degradation lead to aberrant signaling. Over-expressed FGFR2 promotes activation of STAT1 (By similarity).</text>
</comment>
<comment type="catalytic activity">
    <reaction evidence="5">
        <text>L-tyrosyl-[protein] + ATP = O-phospho-L-tyrosyl-[protein] + ADP + H(+)</text>
        <dbReference type="Rhea" id="RHEA:10596"/>
        <dbReference type="Rhea" id="RHEA-COMP:10136"/>
        <dbReference type="Rhea" id="RHEA-COMP:20101"/>
        <dbReference type="ChEBI" id="CHEBI:15378"/>
        <dbReference type="ChEBI" id="CHEBI:30616"/>
        <dbReference type="ChEBI" id="CHEBI:46858"/>
        <dbReference type="ChEBI" id="CHEBI:61978"/>
        <dbReference type="ChEBI" id="CHEBI:456216"/>
        <dbReference type="EC" id="2.7.10.1"/>
    </reaction>
</comment>
<comment type="activity regulation">
    <text evidence="1">Present in an inactive conformation in the absence of bound ligand. Ligand binding leads to dimerization and activation by autophosphorylation on tyrosine residues (By similarity).</text>
</comment>
<comment type="subunit">
    <text evidence="1">Monomer. Homodimer after ligand binding (By similarity).</text>
</comment>
<comment type="subcellular location">
    <subcellularLocation>
        <location>Cell membrane</location>
        <topology>Single-pass type I membrane protein</topology>
    </subcellularLocation>
    <subcellularLocation>
        <location evidence="1">Golgi apparatus</location>
    </subcellularLocation>
    <subcellularLocation>
        <location evidence="1">Cytoplasmic vesicle</location>
    </subcellularLocation>
    <text evidence="1">Detected on osteoblast plasma membrane lipid rafts. After ligand binding, the activated receptor is rapidly internalized and degraded (By similarity).</text>
</comment>
<comment type="domain">
    <text evidence="1">The second and third Ig-like domains directly interact with fibroblast growth factors (FGF) and heparan sulfate proteoglycans.</text>
</comment>
<comment type="PTM">
    <text evidence="1">Autophosphorylated. Binding of FGF family members together with heparan sulfate proteoglycan or heparin promotes receptor dimerization and autophosphorylation on tyrosine residues. Autophosphorylation occurs in trans between the two FGFR molecules present in the dimer (By similarity).</text>
</comment>
<comment type="PTM">
    <text evidence="1">N-glycosylated in the endoplasmic reticulum. The N-glycan chains undergo further maturation to an Endo H-resistant form in the Golgi apparatus (By similarity).</text>
</comment>
<comment type="PTM">
    <text evidence="1">Ubiquitinated. FGFR2 is rapidly ubiquitinated after autophosphorylation, leading to internalization and degradation. Subject to degradation both in lysosomes and by the proteasome (By similarity).</text>
</comment>
<comment type="similarity">
    <text evidence="4">Belongs to the protein kinase superfamily. Tyr protein kinase family. Fibroblast growth factor receptor subfamily.</text>
</comment>
<keyword id="KW-0053">Apoptosis</keyword>
<keyword id="KW-0067">ATP-binding</keyword>
<keyword id="KW-1003">Cell membrane</keyword>
<keyword id="KW-0968">Cytoplasmic vesicle</keyword>
<keyword id="KW-1015">Disulfide bond</keyword>
<keyword id="KW-0325">Glycoprotein</keyword>
<keyword id="KW-0333">Golgi apparatus</keyword>
<keyword id="KW-0393">Immunoglobulin domain</keyword>
<keyword id="KW-0418">Kinase</keyword>
<keyword id="KW-0472">Membrane</keyword>
<keyword id="KW-0547">Nucleotide-binding</keyword>
<keyword id="KW-0597">Phosphoprotein</keyword>
<keyword id="KW-0675">Receptor</keyword>
<keyword id="KW-0677">Repeat</keyword>
<keyword id="KW-0732">Signal</keyword>
<keyword id="KW-0808">Transferase</keyword>
<keyword id="KW-0812">Transmembrane</keyword>
<keyword id="KW-1133">Transmembrane helix</keyword>
<keyword id="KW-0829">Tyrosine-protein kinase</keyword>
<keyword id="KW-0832">Ubl conjugation</keyword>